<accession>Q21412</accession>
<comment type="function">
    <text evidence="3">Involved in transcriptome surveillance. Required for piwi-interacting RNAs (piRNAs) 3'-end trimming, which is important for both fertility and piRNA-directed gene silencing. Has 3' to 5' exonuclease activity in vitro.</text>
</comment>
<comment type="cofactor">
    <cofactor evidence="1">
        <name>a divalent metal cation</name>
        <dbReference type="ChEBI" id="CHEBI:60240"/>
    </cofactor>
</comment>
<comment type="biophysicochemical properties">
    <kinetics>
        <KM evidence="3">18 nM for 5' end-labeled 14-nucleotide RNA substrate</KM>
    </kinetics>
</comment>
<comment type="subcellular location">
    <subcellularLocation>
        <location evidence="3">Cytoplasm</location>
    </subcellularLocation>
    <text evidence="3">Co-localizes with prg-1 in germline nuage structures called P granules.</text>
</comment>
<comment type="tissue specificity">
    <text evidence="2 3">Expressed in germline cells.</text>
</comment>
<comment type="developmental stage">
    <text evidence="3">Expressed at low levels at the L1 to L3 larval stages, but begins to accumulate at the L4 stage and reaches its highest expression level at the gravid adult stage.</text>
</comment>
<comment type="disruption phenotype">
    <text evidence="2 3">Slight changes of mRNA bulk poly(A) tail lengths (PubMed:23843623). Animals display a reduced brood size at elevated temperature of 25 degrees Celsius compared to wild-type (PubMed:23843623, PubMed:26919432). Accumulation of untrimmed piRNAs with 3' extensions, which are stable and able to co-localize with the piwi protein prg-1. However, while the expression levels of piRNAs remain unchanged, the piwi-dependent mRNA silencing is reduced, as is the production of piwi-dependent secondary small interfering RNAs (siRNAs), also called 22G-RNAs, on mRNA targets. 5'-end processing and methylation of 3'-ends are unaffected. No changes in length distribution of other small RNA species, such as microRNAs (miRNAs) (PubMed:26919432).</text>
</comment>
<comment type="similarity">
    <text evidence="6">Belongs to the CAF1 family.</text>
</comment>
<dbReference type="EC" id="3.1.13.-" evidence="3"/>
<dbReference type="EMBL" id="BX284605">
    <property type="protein sequence ID" value="CAA98954.2"/>
    <property type="molecule type" value="Genomic_DNA"/>
</dbReference>
<dbReference type="PIR" id="T23559">
    <property type="entry name" value="T23559"/>
</dbReference>
<dbReference type="RefSeq" id="NP_506169.2">
    <property type="nucleotide sequence ID" value="NM_073768.4"/>
</dbReference>
<dbReference type="SMR" id="Q21412"/>
<dbReference type="DIP" id="DIP-24647N"/>
<dbReference type="FunCoup" id="Q21412">
    <property type="interactions" value="2154"/>
</dbReference>
<dbReference type="STRING" id="6239.K10C8.1.1"/>
<dbReference type="PaxDb" id="6239-K10C8.1"/>
<dbReference type="EnsemblMetazoa" id="K10C8.1.1">
    <property type="protein sequence ID" value="K10C8.1.1"/>
    <property type="gene ID" value="WBGene00010734"/>
</dbReference>
<dbReference type="GeneID" id="187256"/>
<dbReference type="KEGG" id="cel:CELE_K10C8.1"/>
<dbReference type="UCSC" id="K10C8.1">
    <property type="organism name" value="c. elegans"/>
</dbReference>
<dbReference type="AGR" id="WB:WBGene00010734"/>
<dbReference type="CTD" id="187256"/>
<dbReference type="WormBase" id="K10C8.1">
    <property type="protein sequence ID" value="CE39514"/>
    <property type="gene ID" value="WBGene00010734"/>
    <property type="gene designation" value="parn-1"/>
</dbReference>
<dbReference type="eggNOG" id="KOG1990">
    <property type="taxonomic scope" value="Eukaryota"/>
</dbReference>
<dbReference type="GeneTree" id="ENSGT00940000153167"/>
<dbReference type="HOGENOM" id="CLU_018030_2_0_1"/>
<dbReference type="InParanoid" id="Q21412"/>
<dbReference type="OMA" id="SCDRASC"/>
<dbReference type="OrthoDB" id="414075at2759"/>
<dbReference type="PhylomeDB" id="Q21412"/>
<dbReference type="SABIO-RK" id="Q21412"/>
<dbReference type="PRO" id="PR:Q21412"/>
<dbReference type="Proteomes" id="UP000001940">
    <property type="component" value="Chromosome V"/>
</dbReference>
<dbReference type="Bgee" id="WBGene00010734">
    <property type="expression patterns" value="Expressed in germ line (C elegans) and 3 other cell types or tissues"/>
</dbReference>
<dbReference type="GO" id="GO:0005737">
    <property type="term" value="C:cytoplasm"/>
    <property type="evidence" value="ECO:0000314"/>
    <property type="project" value="UniProtKB"/>
</dbReference>
<dbReference type="GO" id="GO:0005783">
    <property type="term" value="C:endoplasmic reticulum"/>
    <property type="evidence" value="ECO:0000318"/>
    <property type="project" value="GO_Central"/>
</dbReference>
<dbReference type="GO" id="GO:0005634">
    <property type="term" value="C:nucleus"/>
    <property type="evidence" value="ECO:0000318"/>
    <property type="project" value="GO_Central"/>
</dbReference>
<dbReference type="GO" id="GO:0043186">
    <property type="term" value="C:P granule"/>
    <property type="evidence" value="ECO:0000314"/>
    <property type="project" value="UniProtKB"/>
</dbReference>
<dbReference type="GO" id="GO:0000175">
    <property type="term" value="F:3'-5'-RNA exonuclease activity"/>
    <property type="evidence" value="ECO:0000314"/>
    <property type="project" value="UniProtKB"/>
</dbReference>
<dbReference type="GO" id="GO:0043169">
    <property type="term" value="F:cation binding"/>
    <property type="evidence" value="ECO:0000250"/>
    <property type="project" value="UniProtKB"/>
</dbReference>
<dbReference type="GO" id="GO:0046872">
    <property type="term" value="F:metal ion binding"/>
    <property type="evidence" value="ECO:0007669"/>
    <property type="project" value="UniProtKB-KW"/>
</dbReference>
<dbReference type="GO" id="GO:0003723">
    <property type="term" value="F:RNA binding"/>
    <property type="evidence" value="ECO:0000250"/>
    <property type="project" value="UniProtKB"/>
</dbReference>
<dbReference type="GO" id="GO:0006402">
    <property type="term" value="P:mRNA catabolic process"/>
    <property type="evidence" value="ECO:0000314"/>
    <property type="project" value="UniProtKB"/>
</dbReference>
<dbReference type="GO" id="GO:0000289">
    <property type="term" value="P:nuclear-transcribed mRNA poly(A) tail shortening"/>
    <property type="evidence" value="ECO:0000318"/>
    <property type="project" value="GO_Central"/>
</dbReference>
<dbReference type="GO" id="GO:0034587">
    <property type="term" value="P:piRNA processing"/>
    <property type="evidence" value="ECO:0000315"/>
    <property type="project" value="UniProtKB"/>
</dbReference>
<dbReference type="GO" id="GO:1990431">
    <property type="term" value="P:priRNA 3'-end processing"/>
    <property type="evidence" value="ECO:0000318"/>
    <property type="project" value="GO_Central"/>
</dbReference>
<dbReference type="GO" id="GO:0022414">
    <property type="term" value="P:reproductive process"/>
    <property type="evidence" value="ECO:0000315"/>
    <property type="project" value="WormBase"/>
</dbReference>
<dbReference type="GO" id="GO:0071025">
    <property type="term" value="P:RNA surveillance"/>
    <property type="evidence" value="ECO:0000315"/>
    <property type="project" value="UniProtKB"/>
</dbReference>
<dbReference type="GO" id="GO:1990432">
    <property type="term" value="P:siRNA 3'-end processing"/>
    <property type="evidence" value="ECO:0000318"/>
    <property type="project" value="GO_Central"/>
</dbReference>
<dbReference type="FunFam" id="3.30.420.10:FF:000266">
    <property type="entry name" value="3'-5' exoribonuclease parn-1"/>
    <property type="match status" value="1"/>
</dbReference>
<dbReference type="FunFam" id="3.30.420.10:FF:000274">
    <property type="entry name" value="3'-5' exoribonuclease parn-1"/>
    <property type="match status" value="1"/>
</dbReference>
<dbReference type="Gene3D" id="3.30.420.10">
    <property type="entry name" value="Ribonuclease H-like superfamily/Ribonuclease H"/>
    <property type="match status" value="2"/>
</dbReference>
<dbReference type="InterPro" id="IPR051181">
    <property type="entry name" value="CAF1_poly(A)_ribonucleases"/>
</dbReference>
<dbReference type="InterPro" id="IPR006941">
    <property type="entry name" value="RNase_CAF1"/>
</dbReference>
<dbReference type="InterPro" id="IPR012337">
    <property type="entry name" value="RNaseH-like_sf"/>
</dbReference>
<dbReference type="InterPro" id="IPR036397">
    <property type="entry name" value="RNaseH_sf"/>
</dbReference>
<dbReference type="PANTHER" id="PTHR15092">
    <property type="entry name" value="POLY A -SPECIFIC RIBONUCLEASE/TARGET OF EGR1, MEMBER 1"/>
    <property type="match status" value="1"/>
</dbReference>
<dbReference type="PANTHER" id="PTHR15092:SF22">
    <property type="entry name" value="POLY(A)-SPECIFIC RIBONUCLEASE PNLDC1"/>
    <property type="match status" value="1"/>
</dbReference>
<dbReference type="Pfam" id="PF04857">
    <property type="entry name" value="CAF1"/>
    <property type="match status" value="1"/>
</dbReference>
<dbReference type="SUPFAM" id="SSF53098">
    <property type="entry name" value="Ribonuclease H-like"/>
    <property type="match status" value="1"/>
</dbReference>
<keyword id="KW-0963">Cytoplasm</keyword>
<keyword id="KW-0269">Exonuclease</keyword>
<keyword id="KW-0378">Hydrolase</keyword>
<keyword id="KW-0460">Magnesium</keyword>
<keyword id="KW-0479">Metal-binding</keyword>
<keyword id="KW-0540">Nuclease</keyword>
<keyword id="KW-1185">Reference proteome</keyword>
<keyword id="KW-0943">RNA-mediated gene silencing</keyword>
<gene>
    <name evidence="7 9" type="primary">parn-1</name>
    <name evidence="9" type="ORF">K10C8.1</name>
</gene>
<evidence type="ECO:0000250" key="1">
    <source>
        <dbReference type="UniProtKB" id="O95453"/>
    </source>
</evidence>
<evidence type="ECO:0000269" key="2">
    <source>
    </source>
</evidence>
<evidence type="ECO:0000269" key="3">
    <source>
    </source>
</evidence>
<evidence type="ECO:0000303" key="4">
    <source>
    </source>
</evidence>
<evidence type="ECO:0000303" key="5">
    <source>
    </source>
</evidence>
<evidence type="ECO:0000305" key="6"/>
<evidence type="ECO:0000312" key="7">
    <source>
        <dbReference type="EMBL" id="CAA98954.2"/>
    </source>
</evidence>
<evidence type="ECO:0000312" key="8">
    <source>
        <dbReference type="Proteomes" id="UP000001940"/>
    </source>
</evidence>
<evidence type="ECO:0000312" key="9">
    <source>
        <dbReference type="WormBase" id="K10C8.1"/>
    </source>
</evidence>
<name>PARN1_CAEEL</name>
<organism evidence="7">
    <name type="scientific">Caenorhabditis elegans</name>
    <dbReference type="NCBI Taxonomy" id="6239"/>
    <lineage>
        <taxon>Eukaryota</taxon>
        <taxon>Metazoa</taxon>
        <taxon>Ecdysozoa</taxon>
        <taxon>Nematoda</taxon>
        <taxon>Chromadorea</taxon>
        <taxon>Rhabditida</taxon>
        <taxon>Rhabditina</taxon>
        <taxon>Rhabditomorpha</taxon>
        <taxon>Rhabditoidea</taxon>
        <taxon>Rhabditidae</taxon>
        <taxon>Peloderinae</taxon>
        <taxon>Caenorhabditis</taxon>
    </lineage>
</organism>
<reference evidence="7 8" key="1">
    <citation type="journal article" date="1998" name="Science">
        <title>Genome sequence of the nematode C. elegans: a platform for investigating biology.</title>
        <authorList>
            <consortium name="The C. elegans sequencing consortium"/>
        </authorList>
    </citation>
    <scope>NUCLEOTIDE SEQUENCE [LARGE SCALE GENOMIC DNA]</scope>
    <source>
        <strain evidence="7 8">Bristol N2</strain>
    </source>
</reference>
<reference key="2">
    <citation type="journal article" date="2013" name="J. Cell Sci.">
        <title>The Ccr4-Not deadenylase complex constitutes the main poly(A) removal activity in C. elegans.</title>
        <authorList>
            <person name="Nousch M."/>
            <person name="Techritz N."/>
            <person name="Hampel D."/>
            <person name="Millonigg S."/>
            <person name="Eckmann C.R."/>
        </authorList>
    </citation>
    <scope>TISSUE SPECIFICITY</scope>
    <scope>DISRUPTION PHENOTYPE</scope>
    <scope>PHYLOGENETIC ANALYSIS</scope>
</reference>
<reference key="3">
    <citation type="journal article" date="2016" name="Cell">
        <title>The RNase PARN-1 trims piRNA 3' ends to promote transcriptome surveillance in C. elegans.</title>
        <authorList>
            <person name="Tang W."/>
            <person name="Tu S."/>
            <person name="Lee H.C."/>
            <person name="Weng Z."/>
            <person name="Mello C.C."/>
        </authorList>
    </citation>
    <scope>FUNCTION</scope>
    <scope>CATALYTIC ACTIVITY</scope>
    <scope>BIOPHYSICOCHEMICAL PROPERTIES</scope>
    <scope>SUBCELLULAR LOCATION</scope>
    <scope>TISSUE SPECIFICITY</scope>
    <scope>DEVELOPMENTAL STAGE</scope>
    <scope>DISRUPTION PHENOTYPE</scope>
    <scope>MUTAGENESIS OF ASP-29</scope>
</reference>
<proteinExistence type="evidence at protein level"/>
<sequence>MVIVTDSNFLDAAGTLRKGLLYCDFVAIDFEFLGLDVSAISLHDTVESRYQILRDNVIKYRPCQLGLTLFKQKSNRAYKADTYSVPLFQRFGDNDTSISLPSMRFLVKNKFNLNQVFMDGVEFCTRKEFKKFERALLAGTAASYLSREVKSQIELLKVMVHEKCYQSTSYHITHRTDEPMQKIPLKMKPNSSVSLRMPRNLSSVEKYMIIYELTKAFPQFLFTCDEKQQNLHVKNISDDYLKEKDNLERARARCSESVKGVSAILQVVHMTGKLVVGHNSLLDAMYMYHYFFSHLPANYQMFKDKFNALFPRIMDTKLLAQALRFELPGVGDSLENLGDYFGSDKSDKTVPPELRGFIEPWMNPLEDESENVYHNAGFDSYVTGEVFLKLAHIYINRRNNFKNEILDFDRIYQYLEAPILNRLPFQLMDVGCCYLTGDDSKGFRPDVITIVRRDRVAIEEDEFRYLEKALGTLMATYQFDIEWSKNKKELFLATNSPGSYAFLCEKFSNDSSLAPLDELDSGKKWTFEQRQTAWRSFKNRGVGIGINAKRIRAQNQATKIQRAMEI</sequence>
<feature type="chain" id="PRO_0000437545" description="3'-5' exoribonuclease parn-1">
    <location>
        <begin position="1"/>
        <end position="566"/>
    </location>
</feature>
<feature type="binding site" evidence="1">
    <location>
        <position position="29"/>
    </location>
    <ligand>
        <name>a divalent metal cation</name>
        <dbReference type="ChEBI" id="CHEBI:60240"/>
        <note>catalytic</note>
    </ligand>
</feature>
<feature type="binding site" evidence="1">
    <location>
        <position position="31"/>
    </location>
    <ligand>
        <name>a divalent metal cation</name>
        <dbReference type="ChEBI" id="CHEBI:60240"/>
        <note>catalytic</note>
    </ligand>
</feature>
<feature type="binding site" evidence="1">
    <location>
        <position position="283"/>
    </location>
    <ligand>
        <name>a divalent metal cation</name>
        <dbReference type="ChEBI" id="CHEBI:60240"/>
        <note>catalytic</note>
    </ligand>
</feature>
<feature type="binding site" evidence="1">
    <location>
        <position position="379"/>
    </location>
    <ligand>
        <name>a divalent metal cation</name>
        <dbReference type="ChEBI" id="CHEBI:60240"/>
        <note>catalytic</note>
    </ligand>
</feature>
<feature type="site" description="Interaction with poly(A)" evidence="1">
    <location>
        <position position="317"/>
    </location>
</feature>
<feature type="mutagenesis site" description="Greatly reduced nuclease activity in vitro." evidence="3">
    <original>D</original>
    <variation>A</variation>
    <location>
        <position position="29"/>
    </location>
</feature>
<protein>
    <recommendedName>
        <fullName evidence="6">3'-5' exoribonuclease parn-1</fullName>
    </recommendedName>
    <alternativeName>
        <fullName evidence="4 9">Poly(A)-specific ribonuclease homolog 1</fullName>
    </alternativeName>
    <alternativeName>
        <fullName evidence="5">RNase parn-1</fullName>
        <ecNumber evidence="3">3.1.13.-</ecNumber>
    </alternativeName>
</protein>